<gene>
    <name evidence="1" type="primary">nuoC</name>
    <name evidence="1" type="synonym">nuoCD</name>
    <name evidence="1" type="synonym">nuoD</name>
    <name type="ordered locus">YpsIP31758_1456</name>
</gene>
<reference key="1">
    <citation type="journal article" date="2007" name="PLoS Genet.">
        <title>The complete genome sequence of Yersinia pseudotuberculosis IP31758, the causative agent of Far East scarlet-like fever.</title>
        <authorList>
            <person name="Eppinger M."/>
            <person name="Rosovitz M.J."/>
            <person name="Fricke W.F."/>
            <person name="Rasko D.A."/>
            <person name="Kokorina G."/>
            <person name="Fayolle C."/>
            <person name="Lindler L.E."/>
            <person name="Carniel E."/>
            <person name="Ravel J."/>
        </authorList>
    </citation>
    <scope>NUCLEOTIDE SEQUENCE [LARGE SCALE GENOMIC DNA]</scope>
    <source>
        <strain>IP 31758</strain>
    </source>
</reference>
<feature type="chain" id="PRO_0000358712" description="NADH-quinone oxidoreductase subunit C/D">
    <location>
        <begin position="1"/>
        <end position="598"/>
    </location>
</feature>
<feature type="region of interest" description="NADH dehydrogenase I subunit C" evidence="1">
    <location>
        <begin position="1"/>
        <end position="189"/>
    </location>
</feature>
<feature type="region of interest" description="NADH dehydrogenase I subunit D" evidence="1">
    <location>
        <begin position="213"/>
        <end position="598"/>
    </location>
</feature>
<name>NUOCD_YERP3</name>
<keyword id="KW-0997">Cell inner membrane</keyword>
<keyword id="KW-1003">Cell membrane</keyword>
<keyword id="KW-0472">Membrane</keyword>
<keyword id="KW-0511">Multifunctional enzyme</keyword>
<keyword id="KW-0520">NAD</keyword>
<keyword id="KW-0874">Quinone</keyword>
<keyword id="KW-1278">Translocase</keyword>
<keyword id="KW-0813">Transport</keyword>
<keyword id="KW-0830">Ubiquinone</keyword>
<comment type="function">
    <text evidence="1">NDH-1 shuttles electrons from NADH, via FMN and iron-sulfur (Fe-S) centers, to quinones in the respiratory chain. The immediate electron acceptor for the enzyme in this species is believed to be ubiquinone. Couples the redox reaction to proton translocation (for every two electrons transferred, four hydrogen ions are translocated across the cytoplasmic membrane), and thus conserves the redox energy in a proton gradient.</text>
</comment>
<comment type="catalytic activity">
    <reaction evidence="1">
        <text>a quinone + NADH + 5 H(+)(in) = a quinol + NAD(+) + 4 H(+)(out)</text>
        <dbReference type="Rhea" id="RHEA:57888"/>
        <dbReference type="ChEBI" id="CHEBI:15378"/>
        <dbReference type="ChEBI" id="CHEBI:24646"/>
        <dbReference type="ChEBI" id="CHEBI:57540"/>
        <dbReference type="ChEBI" id="CHEBI:57945"/>
        <dbReference type="ChEBI" id="CHEBI:132124"/>
    </reaction>
</comment>
<comment type="subunit">
    <text evidence="1">NDH-1 is composed of 13 different subunits. Subunits NuoB, CD, E, F, and G constitute the peripheral sector of the complex.</text>
</comment>
<comment type="subcellular location">
    <subcellularLocation>
        <location evidence="1">Cell inner membrane</location>
        <topology evidence="1">Peripheral membrane protein</topology>
        <orientation evidence="1">Cytoplasmic side</orientation>
    </subcellularLocation>
</comment>
<comment type="similarity">
    <text evidence="1">In the N-terminal section; belongs to the complex I 30 kDa subunit family.</text>
</comment>
<comment type="similarity">
    <text evidence="1">In the C-terminal section; belongs to the complex I 49 kDa subunit family.</text>
</comment>
<sequence length="598" mass="68886">MTDLTTSDSLQPAWQTRDHLDDPVIGELSNRFGPEAFVVQATRTGMPVVWVKREQLLEVMSFLRKQPKPYVMLFDLHGVDERLRTHRQGLPDADFSVFYHLLSIERNRDIMLKVALSEKDLHVSTATKIFPNANWYERETWEMFGITFDGHPHLTRIMMPQSWEGHPLRKDYPARATEFDPYVLTKQKEDLEMESLTFKPEDWGMKRGTENEDFMFLNLGPNHPSSHGAFRIVLQLDGEEIIDCVPDVGYHHRGAEKMGERQSWHSYIPYTDRIEYLGGCVNEMPYVLAVEKLAGIVVPDRVNTIRVMLSELFRINSHLLYISTFIQDVGAMTPVFFAFTDRQKVYDVIEAITGFRMHPAWFRIGGVAHDLPRGWERLLRDFLDWMPKRLDSYVKAALQNSILKGRSVGVAAYNAKEALEWGVTGAGLRATGVEFDVRKWRPYSGYENFDFEVPVGNNGDCYDRVMLKVEELRQSLRILEQCYKNMPEGPFKADHPLTTPPPKERTLQHIETLITHFLQVSWGPVMPANESFQMIEATKGINSYYLTSDGSTMSYRTRIRTPSYAHLQQIPSVIRGSLVSDLIVYLGSIDFVMSDVDR</sequence>
<dbReference type="EC" id="7.1.1.-" evidence="1"/>
<dbReference type="EMBL" id="CP000720">
    <property type="protein sequence ID" value="ABS48423.1"/>
    <property type="molecule type" value="Genomic_DNA"/>
</dbReference>
<dbReference type="RefSeq" id="WP_002210277.1">
    <property type="nucleotide sequence ID" value="NC_009708.1"/>
</dbReference>
<dbReference type="SMR" id="A7FGQ7"/>
<dbReference type="GeneID" id="57976136"/>
<dbReference type="KEGG" id="ypi:YpsIP31758_1456"/>
<dbReference type="HOGENOM" id="CLU_015134_3_2_6"/>
<dbReference type="Proteomes" id="UP000002412">
    <property type="component" value="Chromosome"/>
</dbReference>
<dbReference type="GO" id="GO:0030964">
    <property type="term" value="C:NADH dehydrogenase complex"/>
    <property type="evidence" value="ECO:0007669"/>
    <property type="project" value="InterPro"/>
</dbReference>
<dbReference type="GO" id="GO:0005886">
    <property type="term" value="C:plasma membrane"/>
    <property type="evidence" value="ECO:0007669"/>
    <property type="project" value="UniProtKB-SubCell"/>
</dbReference>
<dbReference type="GO" id="GO:0051287">
    <property type="term" value="F:NAD binding"/>
    <property type="evidence" value="ECO:0007669"/>
    <property type="project" value="InterPro"/>
</dbReference>
<dbReference type="GO" id="GO:0008137">
    <property type="term" value="F:NADH dehydrogenase (ubiquinone) activity"/>
    <property type="evidence" value="ECO:0007669"/>
    <property type="project" value="InterPro"/>
</dbReference>
<dbReference type="GO" id="GO:0050136">
    <property type="term" value="F:NADH:ubiquinone reductase (non-electrogenic) activity"/>
    <property type="evidence" value="ECO:0007669"/>
    <property type="project" value="UniProtKB-UniRule"/>
</dbReference>
<dbReference type="GO" id="GO:0048038">
    <property type="term" value="F:quinone binding"/>
    <property type="evidence" value="ECO:0007669"/>
    <property type="project" value="UniProtKB-KW"/>
</dbReference>
<dbReference type="FunFam" id="1.10.645.10:FF:000001">
    <property type="entry name" value="NADH-quinone oxidoreductase subunit C/D"/>
    <property type="match status" value="1"/>
</dbReference>
<dbReference type="FunFam" id="3.30.460.80:FF:000001">
    <property type="entry name" value="NADH-quinone oxidoreductase subunit C/D"/>
    <property type="match status" value="1"/>
</dbReference>
<dbReference type="Gene3D" id="1.10.645.10">
    <property type="entry name" value="Cytochrome-c3 Hydrogenase, chain B"/>
    <property type="match status" value="1"/>
</dbReference>
<dbReference type="Gene3D" id="3.30.460.80">
    <property type="entry name" value="NADH:ubiquinone oxidoreductase, 30kDa subunit"/>
    <property type="match status" value="1"/>
</dbReference>
<dbReference type="HAMAP" id="MF_01357">
    <property type="entry name" value="NDH1_NuoC"/>
    <property type="match status" value="1"/>
</dbReference>
<dbReference type="HAMAP" id="MF_01359">
    <property type="entry name" value="NDH1_NuoCD_1"/>
    <property type="match status" value="1"/>
</dbReference>
<dbReference type="HAMAP" id="MF_01358">
    <property type="entry name" value="NDH1_NuoD"/>
    <property type="match status" value="1"/>
</dbReference>
<dbReference type="InterPro" id="IPR010218">
    <property type="entry name" value="NADH_DH_suC"/>
</dbReference>
<dbReference type="InterPro" id="IPR023062">
    <property type="entry name" value="NADH_DH_suCD"/>
</dbReference>
<dbReference type="InterPro" id="IPR001135">
    <property type="entry name" value="NADH_Q_OxRdtase_suD"/>
</dbReference>
<dbReference type="InterPro" id="IPR037232">
    <property type="entry name" value="NADH_quin_OxRdtase_su_C/D-like"/>
</dbReference>
<dbReference type="InterPro" id="IPR001268">
    <property type="entry name" value="NADH_UbQ_OxRdtase_30kDa_su"/>
</dbReference>
<dbReference type="InterPro" id="IPR014029">
    <property type="entry name" value="NADH_UbQ_OxRdtase_49kDa_CS"/>
</dbReference>
<dbReference type="InterPro" id="IPR022885">
    <property type="entry name" value="NDH1_su_D/H"/>
</dbReference>
<dbReference type="InterPro" id="IPR029014">
    <property type="entry name" value="NiFe-Hase_large"/>
</dbReference>
<dbReference type="NCBIfam" id="TIGR01961">
    <property type="entry name" value="NuoC_fam"/>
    <property type="match status" value="1"/>
</dbReference>
<dbReference type="NCBIfam" id="TIGR01962">
    <property type="entry name" value="NuoD"/>
    <property type="match status" value="1"/>
</dbReference>
<dbReference type="NCBIfam" id="NF004739">
    <property type="entry name" value="PRK06075.1"/>
    <property type="match status" value="1"/>
</dbReference>
<dbReference type="NCBIfam" id="NF008728">
    <property type="entry name" value="PRK11742.1"/>
    <property type="match status" value="1"/>
</dbReference>
<dbReference type="PANTHER" id="PTHR11993:SF45">
    <property type="entry name" value="NADH-QUINONE OXIDOREDUCTASE SUBUNIT C_D"/>
    <property type="match status" value="1"/>
</dbReference>
<dbReference type="PANTHER" id="PTHR11993">
    <property type="entry name" value="NADH-UBIQUINONE OXIDOREDUCTASE 49 KDA SUBUNIT"/>
    <property type="match status" value="1"/>
</dbReference>
<dbReference type="Pfam" id="PF00329">
    <property type="entry name" value="Complex1_30kDa"/>
    <property type="match status" value="1"/>
</dbReference>
<dbReference type="Pfam" id="PF00346">
    <property type="entry name" value="Complex1_49kDa"/>
    <property type="match status" value="1"/>
</dbReference>
<dbReference type="SUPFAM" id="SSF56762">
    <property type="entry name" value="HydB/Nqo4-like"/>
    <property type="match status" value="1"/>
</dbReference>
<dbReference type="SUPFAM" id="SSF143243">
    <property type="entry name" value="Nqo5-like"/>
    <property type="match status" value="1"/>
</dbReference>
<dbReference type="PROSITE" id="PS00535">
    <property type="entry name" value="COMPLEX1_49K"/>
    <property type="match status" value="1"/>
</dbReference>
<evidence type="ECO:0000255" key="1">
    <source>
        <dbReference type="HAMAP-Rule" id="MF_01359"/>
    </source>
</evidence>
<protein>
    <recommendedName>
        <fullName evidence="1">NADH-quinone oxidoreductase subunit C/D</fullName>
        <ecNumber evidence="1">7.1.1.-</ecNumber>
    </recommendedName>
    <alternativeName>
        <fullName evidence="1">NADH dehydrogenase I subunit C/D</fullName>
    </alternativeName>
    <alternativeName>
        <fullName evidence="1">NDH-1 subunit C/D</fullName>
    </alternativeName>
</protein>
<organism>
    <name type="scientific">Yersinia pseudotuberculosis serotype O:1b (strain IP 31758)</name>
    <dbReference type="NCBI Taxonomy" id="349747"/>
    <lineage>
        <taxon>Bacteria</taxon>
        <taxon>Pseudomonadati</taxon>
        <taxon>Pseudomonadota</taxon>
        <taxon>Gammaproteobacteria</taxon>
        <taxon>Enterobacterales</taxon>
        <taxon>Yersiniaceae</taxon>
        <taxon>Yersinia</taxon>
    </lineage>
</organism>
<accession>A7FGQ7</accession>
<proteinExistence type="inferred from homology"/>